<protein>
    <recommendedName>
        <fullName evidence="1">DNA primase</fullName>
        <ecNumber evidence="1">2.7.7.101</ecNumber>
    </recommendedName>
</protein>
<name>DNAG_PSEPU</name>
<dbReference type="EC" id="2.7.7.101" evidence="1"/>
<dbReference type="EMBL" id="U85774">
    <property type="protein sequence ID" value="AAC45508.1"/>
    <property type="molecule type" value="Genomic_DNA"/>
</dbReference>
<dbReference type="EMBL" id="AF014397">
    <property type="protein sequence ID" value="AAC38072.1"/>
    <property type="molecule type" value="Genomic_DNA"/>
</dbReference>
<dbReference type="RefSeq" id="WP_010951735.1">
    <property type="nucleotide sequence ID" value="NZ_SPUU01000020.1"/>
</dbReference>
<dbReference type="SMR" id="P0A119"/>
<dbReference type="GeneID" id="83677679"/>
<dbReference type="PATRIC" id="fig|303.175.peg.3167"/>
<dbReference type="eggNOG" id="COG0358">
    <property type="taxonomic scope" value="Bacteria"/>
</dbReference>
<dbReference type="BRENDA" id="2.7.7.101">
    <property type="organism ID" value="5092"/>
</dbReference>
<dbReference type="GO" id="GO:0005737">
    <property type="term" value="C:cytoplasm"/>
    <property type="evidence" value="ECO:0007669"/>
    <property type="project" value="TreeGrafter"/>
</dbReference>
<dbReference type="GO" id="GO:0000428">
    <property type="term" value="C:DNA-directed RNA polymerase complex"/>
    <property type="evidence" value="ECO:0007669"/>
    <property type="project" value="UniProtKB-KW"/>
</dbReference>
<dbReference type="GO" id="GO:1990077">
    <property type="term" value="C:primosome complex"/>
    <property type="evidence" value="ECO:0007669"/>
    <property type="project" value="UniProtKB-KW"/>
</dbReference>
<dbReference type="GO" id="GO:0003677">
    <property type="term" value="F:DNA binding"/>
    <property type="evidence" value="ECO:0007669"/>
    <property type="project" value="UniProtKB-KW"/>
</dbReference>
<dbReference type="GO" id="GO:0003899">
    <property type="term" value="F:DNA-directed RNA polymerase activity"/>
    <property type="evidence" value="ECO:0007669"/>
    <property type="project" value="InterPro"/>
</dbReference>
<dbReference type="GO" id="GO:0008270">
    <property type="term" value="F:zinc ion binding"/>
    <property type="evidence" value="ECO:0007669"/>
    <property type="project" value="UniProtKB-UniRule"/>
</dbReference>
<dbReference type="GO" id="GO:0006269">
    <property type="term" value="P:DNA replication, synthesis of primer"/>
    <property type="evidence" value="ECO:0007669"/>
    <property type="project" value="UniProtKB-UniRule"/>
</dbReference>
<dbReference type="CDD" id="cd03364">
    <property type="entry name" value="TOPRIM_DnaG_primases"/>
    <property type="match status" value="1"/>
</dbReference>
<dbReference type="FunFam" id="3.40.1360.10:FF:000002">
    <property type="entry name" value="DNA primase"/>
    <property type="match status" value="1"/>
</dbReference>
<dbReference type="FunFam" id="3.90.580.10:FF:000001">
    <property type="entry name" value="DNA primase"/>
    <property type="match status" value="1"/>
</dbReference>
<dbReference type="FunFam" id="3.90.980.10:FF:000001">
    <property type="entry name" value="DNA primase"/>
    <property type="match status" value="1"/>
</dbReference>
<dbReference type="Gene3D" id="3.40.1360.10">
    <property type="match status" value="1"/>
</dbReference>
<dbReference type="Gene3D" id="3.90.980.10">
    <property type="entry name" value="DNA primase, catalytic core, N-terminal domain"/>
    <property type="match status" value="1"/>
</dbReference>
<dbReference type="Gene3D" id="1.10.860.10">
    <property type="entry name" value="DNAb Helicase, Chain A"/>
    <property type="match status" value="1"/>
</dbReference>
<dbReference type="Gene3D" id="1.20.50.20">
    <property type="entry name" value="DnaG, RNA polymerase domain, helical bundle"/>
    <property type="match status" value="1"/>
</dbReference>
<dbReference type="Gene3D" id="3.90.580.10">
    <property type="entry name" value="Zinc finger, CHC2-type domain"/>
    <property type="match status" value="1"/>
</dbReference>
<dbReference type="HAMAP" id="MF_00974">
    <property type="entry name" value="DNA_primase_DnaG"/>
    <property type="match status" value="1"/>
</dbReference>
<dbReference type="InterPro" id="IPR016136">
    <property type="entry name" value="DNA_helicase_N/primase_C"/>
</dbReference>
<dbReference type="InterPro" id="IPR037068">
    <property type="entry name" value="DNA_primase_core_N_sf"/>
</dbReference>
<dbReference type="InterPro" id="IPR019475">
    <property type="entry name" value="DNA_primase_DnaB-bd"/>
</dbReference>
<dbReference type="InterPro" id="IPR006295">
    <property type="entry name" value="DNA_primase_DnaG"/>
</dbReference>
<dbReference type="InterPro" id="IPR013173">
    <property type="entry name" value="DNA_primase_DnaG_DnaB-bd_dom"/>
</dbReference>
<dbReference type="InterPro" id="IPR036977">
    <property type="entry name" value="DNA_primase_Znf_CHC2"/>
</dbReference>
<dbReference type="InterPro" id="IPR030846">
    <property type="entry name" value="DnaG_bac"/>
</dbReference>
<dbReference type="InterPro" id="IPR013264">
    <property type="entry name" value="DNAG_N"/>
</dbReference>
<dbReference type="InterPro" id="IPR050219">
    <property type="entry name" value="DnaG_primase"/>
</dbReference>
<dbReference type="InterPro" id="IPR034151">
    <property type="entry name" value="TOPRIM_DnaG_bac"/>
</dbReference>
<dbReference type="InterPro" id="IPR006171">
    <property type="entry name" value="TOPRIM_dom"/>
</dbReference>
<dbReference type="InterPro" id="IPR002694">
    <property type="entry name" value="Znf_CHC2"/>
</dbReference>
<dbReference type="NCBIfam" id="TIGR01391">
    <property type="entry name" value="dnaG"/>
    <property type="match status" value="1"/>
</dbReference>
<dbReference type="PANTHER" id="PTHR30313">
    <property type="entry name" value="DNA PRIMASE"/>
    <property type="match status" value="1"/>
</dbReference>
<dbReference type="PANTHER" id="PTHR30313:SF2">
    <property type="entry name" value="DNA PRIMASE"/>
    <property type="match status" value="1"/>
</dbReference>
<dbReference type="Pfam" id="PF10410">
    <property type="entry name" value="DnaB_bind"/>
    <property type="match status" value="1"/>
</dbReference>
<dbReference type="Pfam" id="PF08278">
    <property type="entry name" value="DnaG_DnaB_bind"/>
    <property type="match status" value="1"/>
</dbReference>
<dbReference type="Pfam" id="PF08275">
    <property type="entry name" value="DNAG_N"/>
    <property type="match status" value="1"/>
</dbReference>
<dbReference type="Pfam" id="PF13155">
    <property type="entry name" value="Toprim_2"/>
    <property type="match status" value="1"/>
</dbReference>
<dbReference type="Pfam" id="PF01807">
    <property type="entry name" value="Zn_ribbon_DnaG"/>
    <property type="match status" value="1"/>
</dbReference>
<dbReference type="PIRSF" id="PIRSF002811">
    <property type="entry name" value="DnaG"/>
    <property type="match status" value="1"/>
</dbReference>
<dbReference type="SMART" id="SM00766">
    <property type="entry name" value="DnaG_DnaB_bind"/>
    <property type="match status" value="1"/>
</dbReference>
<dbReference type="SMART" id="SM00493">
    <property type="entry name" value="TOPRIM"/>
    <property type="match status" value="1"/>
</dbReference>
<dbReference type="SMART" id="SM00400">
    <property type="entry name" value="ZnF_CHCC"/>
    <property type="match status" value="1"/>
</dbReference>
<dbReference type="SUPFAM" id="SSF56731">
    <property type="entry name" value="DNA primase core"/>
    <property type="match status" value="1"/>
</dbReference>
<dbReference type="SUPFAM" id="SSF117023">
    <property type="entry name" value="DNA primase DnaG, C-terminal domain"/>
    <property type="match status" value="1"/>
</dbReference>
<dbReference type="SUPFAM" id="SSF57783">
    <property type="entry name" value="Zinc beta-ribbon"/>
    <property type="match status" value="1"/>
</dbReference>
<dbReference type="PROSITE" id="PS50880">
    <property type="entry name" value="TOPRIM"/>
    <property type="match status" value="1"/>
</dbReference>
<proteinExistence type="inferred from homology"/>
<comment type="function">
    <text evidence="1">RNA polymerase that catalyzes the synthesis of short RNA molecules used as primers for DNA polymerase during DNA replication.</text>
</comment>
<comment type="catalytic activity">
    <reaction evidence="1">
        <text>ssDNA + n NTP = ssDNA/pppN(pN)n-1 hybrid + (n-1) diphosphate.</text>
        <dbReference type="EC" id="2.7.7.101"/>
    </reaction>
</comment>
<comment type="cofactor">
    <cofactor evidence="1">
        <name>Zn(2+)</name>
        <dbReference type="ChEBI" id="CHEBI:29105"/>
    </cofactor>
    <text evidence="1">Binds 1 zinc ion per monomer.</text>
</comment>
<comment type="cofactor">
    <cofactor evidence="1">
        <name>Mg(2+)</name>
        <dbReference type="ChEBI" id="CHEBI:18420"/>
    </cofactor>
    <text evidence="1">Binds two Mg(2+) per subunit.</text>
</comment>
<comment type="subunit">
    <text evidence="1">Monomer. Interacts with DnaB.</text>
</comment>
<comment type="domain">
    <text evidence="1">Contains an N-terminal zinc-binding domain, a central core domain that contains the primase activity, and a C-terminal DnaB-binding domain.</text>
</comment>
<comment type="similarity">
    <text evidence="1">Belongs to the DnaG primase family.</text>
</comment>
<gene>
    <name evidence="1" type="primary">dnaG</name>
</gene>
<reference key="1">
    <citation type="journal article" date="1997" name="Biochim. Biophys. Acta">
        <title>Cloning and analysis of the dnaG gene encoding Pseudomonas putida DNA primase.</title>
        <authorList>
            <person name="Szafranski P."/>
            <person name="Smith C.L."/>
            <person name="Cantor C.R."/>
        </authorList>
    </citation>
    <scope>NUCLEOTIDE SEQUENCE [GENOMIC DNA]</scope>
    <source>
        <strain>ATCC 33015 / DSM 3931 / JCM 6156 / NCIMB 12182 / mt-2</strain>
    </source>
</reference>
<feature type="chain" id="PRO_0000180514" description="DNA primase">
    <location>
        <begin position="1"/>
        <end position="660"/>
    </location>
</feature>
<feature type="domain" description="Toprim" evidence="1">
    <location>
        <begin position="261"/>
        <end position="343"/>
    </location>
</feature>
<feature type="zinc finger region" description="CHC2-type" evidence="1">
    <location>
        <begin position="40"/>
        <end position="64"/>
    </location>
</feature>
<feature type="region of interest" description="Disordered" evidence="2">
    <location>
        <begin position="94"/>
        <end position="115"/>
    </location>
</feature>
<feature type="region of interest" description="Disordered" evidence="2">
    <location>
        <begin position="425"/>
        <end position="449"/>
    </location>
</feature>
<feature type="region of interest" description="Disordered" evidence="2">
    <location>
        <begin position="476"/>
        <end position="519"/>
    </location>
</feature>
<feature type="compositionally biased region" description="Basic and acidic residues" evidence="2">
    <location>
        <begin position="97"/>
        <end position="110"/>
    </location>
</feature>
<feature type="compositionally biased region" description="Polar residues" evidence="2">
    <location>
        <begin position="428"/>
        <end position="442"/>
    </location>
</feature>
<feature type="compositionally biased region" description="Basic and acidic residues" evidence="2">
    <location>
        <begin position="488"/>
        <end position="498"/>
    </location>
</feature>
<feature type="binding site" evidence="1">
    <location>
        <position position="267"/>
    </location>
    <ligand>
        <name>Mg(2+)</name>
        <dbReference type="ChEBI" id="CHEBI:18420"/>
        <label>1</label>
        <note>catalytic</note>
    </ligand>
</feature>
<feature type="binding site" evidence="1">
    <location>
        <position position="311"/>
    </location>
    <ligand>
        <name>Mg(2+)</name>
        <dbReference type="ChEBI" id="CHEBI:18420"/>
        <label>1</label>
        <note>catalytic</note>
    </ligand>
</feature>
<feature type="binding site" evidence="1">
    <location>
        <position position="311"/>
    </location>
    <ligand>
        <name>Mg(2+)</name>
        <dbReference type="ChEBI" id="CHEBI:18420"/>
        <label>2</label>
    </ligand>
</feature>
<feature type="binding site" evidence="1">
    <location>
        <position position="313"/>
    </location>
    <ligand>
        <name>Mg(2+)</name>
        <dbReference type="ChEBI" id="CHEBI:18420"/>
        <label>2</label>
    </ligand>
</feature>
<sequence>MAGLIPQSFIDDLINRLDIVDVVSSRVQLKKTGKNYSACCPFHKEKTPSFTVSPDKQFYYCFGCGAGGNALGFVMDHDNLDFPQAVEELARAAGMEVPREQGRRDQKPRQPTDSPLYPLLDAASEFYRQALRSHPSRKAAVDYLKGRGLSGEIARDFGLGFAPPGWDNLLKHLGADTLQQKVMIDAGLLIENAESGKRYDRFRDRVMFPIRDSRGRIIAFGGRVLGDDKPKYLNSPETPVFHKGQELYGLYEARKHNRNLDEIIVVEGYMDVIALAQQGLRNAVATLGTATSEEHLKRLFRVVPSVLFCFDGDQAGRKAAWRALESTLSNLQDGRRARFLFLPEGEDPDSLVRAEGTDAFMARINQHSQPLADYFFEQLGVEADPRSLEGKAHMATLAAPLIEKIPGANLRQLMRNRLKEITGLDPQQVEQLAQQAPATSSMPDYDPGYDYDAMASYTPDYGDMPQHDYAPVHQEQAWKPNKGGSKKPWSDKPWDKNRKGGKPWQQRDEAPPRVPAPVEPPTLAALRTLLHHPLLAGKVEDASHFADEEHLYSQLLVALIEAAQKNPGLSSMQLIARWHGTEQGRLLRALAEKEWLIVADNLEQQFFDTITSLSARQRERSLEQLLRKSRQSELTSEEKTQLLALLSRNVPAQTPTSSGA</sequence>
<accession>P0A119</accession>
<accession>O33470</accession>
<organism>
    <name type="scientific">Pseudomonas putida</name>
    <name type="common">Arthrobacter siderocapsulatus</name>
    <dbReference type="NCBI Taxonomy" id="303"/>
    <lineage>
        <taxon>Bacteria</taxon>
        <taxon>Pseudomonadati</taxon>
        <taxon>Pseudomonadota</taxon>
        <taxon>Gammaproteobacteria</taxon>
        <taxon>Pseudomonadales</taxon>
        <taxon>Pseudomonadaceae</taxon>
        <taxon>Pseudomonas</taxon>
    </lineage>
</organism>
<keyword id="KW-0235">DNA replication</keyword>
<keyword id="KW-0238">DNA-binding</keyword>
<keyword id="KW-0240">DNA-directed RNA polymerase</keyword>
<keyword id="KW-0460">Magnesium</keyword>
<keyword id="KW-0479">Metal-binding</keyword>
<keyword id="KW-0548">Nucleotidyltransferase</keyword>
<keyword id="KW-0639">Primosome</keyword>
<keyword id="KW-0804">Transcription</keyword>
<keyword id="KW-0808">Transferase</keyword>
<keyword id="KW-0862">Zinc</keyword>
<keyword id="KW-0863">Zinc-finger</keyword>
<evidence type="ECO:0000255" key="1">
    <source>
        <dbReference type="HAMAP-Rule" id="MF_00974"/>
    </source>
</evidence>
<evidence type="ECO:0000256" key="2">
    <source>
        <dbReference type="SAM" id="MobiDB-lite"/>
    </source>
</evidence>